<accession>Q887C6</accession>
<accession>Q52474</accession>
<accession>Q6L901</accession>
<dbReference type="EMBL" id="AF232004">
    <property type="protein sequence ID" value="AAB00127.1"/>
    <property type="molecule type" value="Genomic_DNA"/>
</dbReference>
<dbReference type="EMBL" id="AB112567">
    <property type="protein sequence ID" value="BAD20880.1"/>
    <property type="molecule type" value="Genomic_DNA"/>
</dbReference>
<dbReference type="EMBL" id="AE016853">
    <property type="protein sequence ID" value="AAO54904.1"/>
    <property type="molecule type" value="Genomic_DNA"/>
</dbReference>
<dbReference type="RefSeq" id="NP_791209.1">
    <property type="nucleotide sequence ID" value="NC_004578.1"/>
</dbReference>
<dbReference type="RefSeq" id="WP_005763902.1">
    <property type="nucleotide sequence ID" value="NC_004578.1"/>
</dbReference>
<dbReference type="STRING" id="223283.PSPTO_1382"/>
<dbReference type="DNASU" id="1183018"/>
<dbReference type="GeneID" id="1183018"/>
<dbReference type="KEGG" id="pst:PSPTO_1382"/>
<dbReference type="PATRIC" id="fig|223283.9.peg.1404"/>
<dbReference type="eggNOG" id="ENOG5032BF5">
    <property type="taxonomic scope" value="Bacteria"/>
</dbReference>
<dbReference type="HOGENOM" id="CLU_071571_0_0_6"/>
<dbReference type="OrthoDB" id="6853773at2"/>
<dbReference type="Proteomes" id="UP000002515">
    <property type="component" value="Chromosome"/>
</dbReference>
<dbReference type="GO" id="GO:0005576">
    <property type="term" value="C:extracellular region"/>
    <property type="evidence" value="ECO:0007669"/>
    <property type="project" value="UniProtKB-SubCell"/>
</dbReference>
<dbReference type="GO" id="GO:0020002">
    <property type="term" value="C:host cell plasma membrane"/>
    <property type="evidence" value="ECO:0007669"/>
    <property type="project" value="UniProtKB-SubCell"/>
</dbReference>
<dbReference type="GO" id="GO:0016020">
    <property type="term" value="C:membrane"/>
    <property type="evidence" value="ECO:0007669"/>
    <property type="project" value="UniProtKB-KW"/>
</dbReference>
<dbReference type="GO" id="GO:0034220">
    <property type="term" value="P:monoatomic ion transmembrane transport"/>
    <property type="evidence" value="ECO:0007669"/>
    <property type="project" value="UniProtKB-KW"/>
</dbReference>
<dbReference type="GO" id="GO:0052040">
    <property type="term" value="P:symbiont-mediated perturbation of host programmed cell death"/>
    <property type="evidence" value="ECO:0007669"/>
    <property type="project" value="UniProtKB-KW"/>
</dbReference>
<dbReference type="InterPro" id="IPR006961">
    <property type="entry name" value="HrpN/Z"/>
</dbReference>
<dbReference type="InterPro" id="IPR054634">
    <property type="entry name" value="T3SS_HrpZ"/>
</dbReference>
<dbReference type="NCBIfam" id="NF045569">
    <property type="entry name" value="T3SSHrpZ"/>
    <property type="match status" value="1"/>
</dbReference>
<dbReference type="Pfam" id="PF04877">
    <property type="entry name" value="Harpin"/>
    <property type="match status" value="1"/>
</dbReference>
<feature type="chain" id="PRO_0000220301" description="Harpin HrpZ">
    <location>
        <begin position="1"/>
        <end position="370"/>
    </location>
</feature>
<feature type="repeat" description="1-1">
    <location>
        <begin position="235"/>
        <end position="240"/>
    </location>
</feature>
<feature type="repeat" description="1-2">
    <location>
        <begin position="286"/>
        <end position="291"/>
    </location>
</feature>
<feature type="region of interest" description="Disordered" evidence="2">
    <location>
        <begin position="221"/>
        <end position="257"/>
    </location>
</feature>
<feature type="region of interest" description="2 X 7 AA repeats of G-G-G-L-G-[ST]-P">
    <location>
        <begin position="235"/>
        <end position="291"/>
    </location>
</feature>
<feature type="region of interest" description="Disordered" evidence="2">
    <location>
        <begin position="282"/>
        <end position="314"/>
    </location>
</feature>
<feature type="compositionally biased region" description="Polar residues" evidence="2">
    <location>
        <begin position="221"/>
        <end position="231"/>
    </location>
</feature>
<feature type="compositionally biased region" description="Polar residues" evidence="2">
    <location>
        <begin position="292"/>
        <end position="313"/>
    </location>
</feature>
<feature type="sequence variant" description="In strain: ICMP 2844.">
    <original>V</original>
    <variation>A</variation>
    <location>
        <position position="265"/>
    </location>
</feature>
<feature type="sequence conflict" description="In Ref. 1 and 2." evidence="4" ref="1 2">
    <original>A</original>
    <variation>V</variation>
    <location>
        <position position="304"/>
    </location>
</feature>
<feature type="sequence conflict" description="In Ref. 1 and 2." evidence="4" ref="1 2">
    <original>L</original>
    <variation>R</variation>
    <location>
        <position position="324"/>
    </location>
</feature>
<keyword id="KW-1032">Host cell membrane</keyword>
<keyword id="KW-1043">Host membrane</keyword>
<keyword id="KW-0928">Hypersensitive response elicitation</keyword>
<keyword id="KW-0407">Ion channel</keyword>
<keyword id="KW-0406">Ion transport</keyword>
<keyword id="KW-0472">Membrane</keyword>
<keyword id="KW-1185">Reference proteome</keyword>
<keyword id="KW-0677">Repeat</keyword>
<keyword id="KW-0964">Secreted</keyword>
<keyword id="KW-0813">Transport</keyword>
<keyword id="KW-0843">Virulence</keyword>
<protein>
    <recommendedName>
        <fullName>Harpin HrpZ</fullName>
    </recommendedName>
    <alternativeName>
        <fullName>Harpin-Pst</fullName>
    </alternativeName>
    <alternativeName>
        <fullName>HrpZ-Pst protein</fullName>
    </alternativeName>
</protein>
<organism>
    <name type="scientific">Pseudomonas syringae pv. tomato (strain ATCC BAA-871 / DC3000)</name>
    <dbReference type="NCBI Taxonomy" id="223283"/>
    <lineage>
        <taxon>Bacteria</taxon>
        <taxon>Pseudomonadati</taxon>
        <taxon>Pseudomonadota</taxon>
        <taxon>Gammaproteobacteria</taxon>
        <taxon>Pseudomonadales</taxon>
        <taxon>Pseudomonadaceae</taxon>
        <taxon>Pseudomonas</taxon>
    </lineage>
</organism>
<gene>
    <name type="primary">hrpZ</name>
    <name type="ordered locus">PSPTO_1382</name>
</gene>
<reference key="1">
    <citation type="journal article" date="1995" name="Mol. Plant Microbe Interact.">
        <title>The HrpZ proteins of Pseudomonas syringae pvs. syringae, glycinea, and tomato are encoded by an operon containing Yersinia ysc homologs and elicit the hypersensitive response in tomato but not soybean.</title>
        <authorList>
            <person name="Preston G."/>
            <person name="Huang H.-C."/>
            <person name="He S.Y."/>
            <person name="Collmer A."/>
        </authorList>
    </citation>
    <scope>NUCLEOTIDE SEQUENCE [GENOMIC DNA]</scope>
    <scope>FUNCTION IN HR</scope>
    <source>
        <strain>ATCC BAA-871 / DC3000</strain>
    </source>
</reference>
<reference key="2">
    <citation type="journal article" date="2003" name="Mol. Plant Microbe Interact.">
        <title>A Pseudomonas syringae pv. tomato DC3000 Hrp (type III secretion) deletion mutant expressing the Hrp system of bean pathogen P. syringae pv. syringae 61 retains normal host specificity for tomato.</title>
        <authorList>
            <person name="Fouts D.E."/>
            <person name="Badel J.L."/>
            <person name="Ramos A.R."/>
            <person name="Rapp R.A."/>
            <person name="Collmer A."/>
        </authorList>
    </citation>
    <scope>NUCLEOTIDE SEQUENCE [GENOMIC DNA]</scope>
    <source>
        <strain>ATCC BAA-871 / DC3000</strain>
    </source>
</reference>
<reference key="3">
    <citation type="submission" date="2003-06" db="EMBL/GenBank/DDBJ databases">
        <title>Phylogenic analysis of DNA sequences around the hrpZ regions of Pseudomonas syringae.</title>
        <authorList>
            <person name="Inoue Y."/>
            <person name="Takikawa Y."/>
        </authorList>
    </citation>
    <scope>NUCLEOTIDE SEQUENCE [GENOMIC DNA]</scope>
    <source>
        <strain>ICMP 2844</strain>
    </source>
</reference>
<reference key="4">
    <citation type="journal article" date="2003" name="Proc. Natl. Acad. Sci. U.S.A.">
        <title>The complete genome sequence of the Arabidopsis and tomato pathogen Pseudomonas syringae pv. tomato DC3000.</title>
        <authorList>
            <person name="Buell C.R."/>
            <person name="Joardar V."/>
            <person name="Lindeberg M."/>
            <person name="Selengut J."/>
            <person name="Paulsen I.T."/>
            <person name="Gwinn M.L."/>
            <person name="Dodson R.J."/>
            <person name="DeBoy R.T."/>
            <person name="Durkin A.S."/>
            <person name="Kolonay J.F."/>
            <person name="Madupu R."/>
            <person name="Daugherty S.C."/>
            <person name="Brinkac L.M."/>
            <person name="Beanan M.J."/>
            <person name="Haft D.H."/>
            <person name="Nelson W.C."/>
            <person name="Davidsen T.M."/>
            <person name="Zafar N."/>
            <person name="Zhou L."/>
            <person name="Liu J."/>
            <person name="Yuan Q."/>
            <person name="Khouri H.M."/>
            <person name="Fedorova N.B."/>
            <person name="Tran B."/>
            <person name="Russell D."/>
            <person name="Berry K.J."/>
            <person name="Utterback T.R."/>
            <person name="Van Aken S.E."/>
            <person name="Feldblyum T.V."/>
            <person name="D'Ascenzo M."/>
            <person name="Deng W.-L."/>
            <person name="Ramos A.R."/>
            <person name="Alfano J.R."/>
            <person name="Cartinhour S."/>
            <person name="Chatterjee A.K."/>
            <person name="Delaney T.P."/>
            <person name="Lazarowitz S.G."/>
            <person name="Martin G.B."/>
            <person name="Schneider D.J."/>
            <person name="Tang X."/>
            <person name="Bender C.L."/>
            <person name="White O."/>
            <person name="Fraser C.M."/>
            <person name="Collmer A."/>
        </authorList>
    </citation>
    <scope>NUCLEOTIDE SEQUENCE [LARGE SCALE GENOMIC DNA]</scope>
    <source>
        <strain>ATCC BAA-871 / DC3000</strain>
    </source>
</reference>
<reference key="5">
    <citation type="journal article" date="2001" name="Mol. Plant Microbe Interact.">
        <title>Immunocytochemical localization of hrpA and hrpZ supports a role for the hrp pilus in the transfer of effector proteins from Pseudomonas syringae pv. tomato across the host plant cell wall.</title>
        <authorList>
            <person name="Brown I.R."/>
            <person name="Mansfield J.W."/>
            <person name="Taira S."/>
            <person name="Roine E."/>
            <person name="Romantschuk M."/>
        </authorList>
    </citation>
    <scope>SUBCELLULAR LOCATION</scope>
    <source>
        <strain>ATCC BAA-871 / DC3000</strain>
    </source>
</reference>
<reference key="6">
    <citation type="journal article" date="2002" name="EMBO J.">
        <title>The Hrp pilus of Pseudomonas syringae elongates from its tip and acts as a conduit for translocation of the effector protein HrpZ.</title>
        <authorList>
            <person name="Li C.-M."/>
            <person name="Brown I.R."/>
            <person name="Mansfield J.W."/>
            <person name="Stevens C."/>
            <person name="Boureau T."/>
            <person name="Romantschuk M."/>
            <person name="Taira S."/>
        </authorList>
    </citation>
    <scope>SUBCELLULAR LOCATION</scope>
    <source>
        <strain>ATCC BAA-871 / DC3000</strain>
    </source>
</reference>
<sequence length="370" mass="36513">MQALNSISSLQTSASLFPVSLNSDVSANTSTSSKELKAVIDQLVQALTQSGQLDETSPLGKMLAKAMAADGKSANSIDDITASLDKLIHEKLGDNFGASAGIGAGGGGGGIGGAGSGSGVGGGLSSDAGAGQSDLMSQVLNGLGKAVLDDLLTPSGEGGTTFSSDDMPTLEKVAQFMDDNKAQFPTRDGGSWMNELKEDNGLDAQETAQFRSALDVIGQQLGQQQGDASGVTSGGGLGSPVSDSSLGNPAIDANTGPAANGNASVDVGQLIGQLIDRGLQSVSSGGGLGTPVDNSTQPTGGTPAANPTGNVSNQDLGQLLSGLLQRGLEATLQDAGNTGADLQSSAAQVAAQLINALLQGTNNQTNQAVA</sequence>
<comment type="function">
    <text evidence="1 3">Harpins are proteins able to elicit hypersensitive response (HR) in non-host plants and are required for pathogenicity in host plants. HrpZ forms ion-conducting pores permeable for cations. Such pore-forming activity may allow nutrient release and/or delivery of virulence factors during bacterial colonization of host plants (By similarity).</text>
</comment>
<comment type="subunit">
    <text evidence="1">Homomultimeric.</text>
</comment>
<comment type="subcellular location">
    <subcellularLocation>
        <location>Secreted</location>
    </subcellularLocation>
    <subcellularLocation>
        <location evidence="4">Host cell membrane</location>
    </subcellularLocation>
    <text>Secreted via type III secretion system (T3SS), delivered into the host intercellular space. HrpZ travels through the hrp pilus and it is secreted only from the pilus tip.</text>
</comment>
<comment type="domain">
    <text>The glycine-rich region is characteristic of harpins.</text>
</comment>
<comment type="similarity">
    <text evidence="4">Belongs to the harpin HrpZ family.</text>
</comment>
<name>HRPZ_PSESM</name>
<evidence type="ECO:0000250" key="1"/>
<evidence type="ECO:0000256" key="2">
    <source>
        <dbReference type="SAM" id="MobiDB-lite"/>
    </source>
</evidence>
<evidence type="ECO:0000269" key="3">
    <source>
    </source>
</evidence>
<evidence type="ECO:0000305" key="4"/>
<proteinExistence type="evidence at protein level"/>